<accession>A0KTZ2</accession>
<dbReference type="EC" id="5.3.1.1" evidence="1"/>
<dbReference type="EMBL" id="CP000469">
    <property type="protein sequence ID" value="ABK47261.1"/>
    <property type="molecule type" value="Genomic_DNA"/>
</dbReference>
<dbReference type="RefSeq" id="WP_011071430.1">
    <property type="nucleotide sequence ID" value="NC_008577.1"/>
</dbReference>
<dbReference type="SMR" id="A0KTZ2"/>
<dbReference type="STRING" id="94122.Shewana3_1026"/>
<dbReference type="GeneID" id="94727015"/>
<dbReference type="KEGG" id="shn:Shewana3_1026"/>
<dbReference type="eggNOG" id="COG0149">
    <property type="taxonomic scope" value="Bacteria"/>
</dbReference>
<dbReference type="HOGENOM" id="CLU_024251_2_1_6"/>
<dbReference type="OrthoDB" id="9809429at2"/>
<dbReference type="UniPathway" id="UPA00109">
    <property type="reaction ID" value="UER00189"/>
</dbReference>
<dbReference type="UniPathway" id="UPA00138"/>
<dbReference type="Proteomes" id="UP000002589">
    <property type="component" value="Chromosome"/>
</dbReference>
<dbReference type="GO" id="GO:0005829">
    <property type="term" value="C:cytosol"/>
    <property type="evidence" value="ECO:0007669"/>
    <property type="project" value="TreeGrafter"/>
</dbReference>
<dbReference type="GO" id="GO:0004807">
    <property type="term" value="F:triose-phosphate isomerase activity"/>
    <property type="evidence" value="ECO:0007669"/>
    <property type="project" value="UniProtKB-UniRule"/>
</dbReference>
<dbReference type="GO" id="GO:0006094">
    <property type="term" value="P:gluconeogenesis"/>
    <property type="evidence" value="ECO:0007669"/>
    <property type="project" value="UniProtKB-UniRule"/>
</dbReference>
<dbReference type="GO" id="GO:0046166">
    <property type="term" value="P:glyceraldehyde-3-phosphate biosynthetic process"/>
    <property type="evidence" value="ECO:0007669"/>
    <property type="project" value="TreeGrafter"/>
</dbReference>
<dbReference type="GO" id="GO:0019563">
    <property type="term" value="P:glycerol catabolic process"/>
    <property type="evidence" value="ECO:0007669"/>
    <property type="project" value="TreeGrafter"/>
</dbReference>
<dbReference type="GO" id="GO:0006096">
    <property type="term" value="P:glycolytic process"/>
    <property type="evidence" value="ECO:0007669"/>
    <property type="project" value="UniProtKB-UniRule"/>
</dbReference>
<dbReference type="CDD" id="cd00311">
    <property type="entry name" value="TIM"/>
    <property type="match status" value="1"/>
</dbReference>
<dbReference type="FunFam" id="3.20.20.70:FF:000016">
    <property type="entry name" value="Triosephosphate isomerase"/>
    <property type="match status" value="1"/>
</dbReference>
<dbReference type="Gene3D" id="3.20.20.70">
    <property type="entry name" value="Aldolase class I"/>
    <property type="match status" value="1"/>
</dbReference>
<dbReference type="HAMAP" id="MF_00147_B">
    <property type="entry name" value="TIM_B"/>
    <property type="match status" value="1"/>
</dbReference>
<dbReference type="InterPro" id="IPR013785">
    <property type="entry name" value="Aldolase_TIM"/>
</dbReference>
<dbReference type="InterPro" id="IPR035990">
    <property type="entry name" value="TIM_sf"/>
</dbReference>
<dbReference type="InterPro" id="IPR022896">
    <property type="entry name" value="TrioseP_Isoase_bac/euk"/>
</dbReference>
<dbReference type="InterPro" id="IPR000652">
    <property type="entry name" value="Triosephosphate_isomerase"/>
</dbReference>
<dbReference type="InterPro" id="IPR020861">
    <property type="entry name" value="Triosephosphate_isomerase_AS"/>
</dbReference>
<dbReference type="NCBIfam" id="TIGR00419">
    <property type="entry name" value="tim"/>
    <property type="match status" value="1"/>
</dbReference>
<dbReference type="PANTHER" id="PTHR21139">
    <property type="entry name" value="TRIOSEPHOSPHATE ISOMERASE"/>
    <property type="match status" value="1"/>
</dbReference>
<dbReference type="PANTHER" id="PTHR21139:SF42">
    <property type="entry name" value="TRIOSEPHOSPHATE ISOMERASE"/>
    <property type="match status" value="1"/>
</dbReference>
<dbReference type="Pfam" id="PF00121">
    <property type="entry name" value="TIM"/>
    <property type="match status" value="1"/>
</dbReference>
<dbReference type="SUPFAM" id="SSF51351">
    <property type="entry name" value="Triosephosphate isomerase (TIM)"/>
    <property type="match status" value="1"/>
</dbReference>
<dbReference type="PROSITE" id="PS00171">
    <property type="entry name" value="TIM_1"/>
    <property type="match status" value="1"/>
</dbReference>
<dbReference type="PROSITE" id="PS51440">
    <property type="entry name" value="TIM_2"/>
    <property type="match status" value="1"/>
</dbReference>
<name>TPIS_SHESA</name>
<organism>
    <name type="scientific">Shewanella sp. (strain ANA-3)</name>
    <dbReference type="NCBI Taxonomy" id="94122"/>
    <lineage>
        <taxon>Bacteria</taxon>
        <taxon>Pseudomonadati</taxon>
        <taxon>Pseudomonadota</taxon>
        <taxon>Gammaproteobacteria</taxon>
        <taxon>Alteromonadales</taxon>
        <taxon>Shewanellaceae</taxon>
        <taxon>Shewanella</taxon>
    </lineage>
</organism>
<reference key="1">
    <citation type="submission" date="2006-09" db="EMBL/GenBank/DDBJ databases">
        <title>Complete sequence of chromosome 1 of Shewanella sp. ANA-3.</title>
        <authorList>
            <person name="Copeland A."/>
            <person name="Lucas S."/>
            <person name="Lapidus A."/>
            <person name="Barry K."/>
            <person name="Detter J.C."/>
            <person name="Glavina del Rio T."/>
            <person name="Hammon N."/>
            <person name="Israni S."/>
            <person name="Dalin E."/>
            <person name="Tice H."/>
            <person name="Pitluck S."/>
            <person name="Chertkov O."/>
            <person name="Brettin T."/>
            <person name="Bruce D."/>
            <person name="Han C."/>
            <person name="Tapia R."/>
            <person name="Gilna P."/>
            <person name="Schmutz J."/>
            <person name="Larimer F."/>
            <person name="Land M."/>
            <person name="Hauser L."/>
            <person name="Kyrpides N."/>
            <person name="Kim E."/>
            <person name="Newman D."/>
            <person name="Salticov C."/>
            <person name="Konstantinidis K."/>
            <person name="Klappenback J."/>
            <person name="Tiedje J."/>
            <person name="Richardson P."/>
        </authorList>
    </citation>
    <scope>NUCLEOTIDE SEQUENCE [LARGE SCALE GENOMIC DNA]</scope>
    <source>
        <strain>ANA-3</strain>
    </source>
</reference>
<keyword id="KW-0963">Cytoplasm</keyword>
<keyword id="KW-0312">Gluconeogenesis</keyword>
<keyword id="KW-0324">Glycolysis</keyword>
<keyword id="KW-0413">Isomerase</keyword>
<protein>
    <recommendedName>
        <fullName evidence="1">Triosephosphate isomerase</fullName>
        <shortName evidence="1">TIM</shortName>
        <shortName evidence="1">TPI</shortName>
        <ecNumber evidence="1">5.3.1.1</ecNumber>
    </recommendedName>
    <alternativeName>
        <fullName evidence="1">Triose-phosphate isomerase</fullName>
    </alternativeName>
</protein>
<feature type="chain" id="PRO_0000307556" description="Triosephosphate isomerase">
    <location>
        <begin position="1"/>
        <end position="260"/>
    </location>
</feature>
<feature type="active site" description="Electrophile" evidence="1">
    <location>
        <position position="103"/>
    </location>
</feature>
<feature type="active site" description="Proton acceptor" evidence="1">
    <location>
        <position position="175"/>
    </location>
</feature>
<feature type="binding site" evidence="1">
    <location>
        <begin position="11"/>
        <end position="13"/>
    </location>
    <ligand>
        <name>substrate</name>
    </ligand>
</feature>
<feature type="binding site" evidence="1">
    <location>
        <position position="181"/>
    </location>
    <ligand>
        <name>substrate</name>
    </ligand>
</feature>
<feature type="binding site" evidence="1">
    <location>
        <position position="220"/>
    </location>
    <ligand>
        <name>substrate</name>
    </ligand>
</feature>
<feature type="binding site" evidence="1">
    <location>
        <begin position="241"/>
        <end position="242"/>
    </location>
    <ligand>
        <name>substrate</name>
    </ligand>
</feature>
<sequence>MALRRPMVAGNWKMNGSAALAQELFKKFASKLQNDSAEVVLCPPSIYLESVRQLLEANKEALDGSLVRMGAQNLSQHDFGAYTGEVSGQMLKDCGCRYVIIGHSERRRMYGETSNIVAEKFAAAQKHGLTPILCVGESGPAREARRTFEVIAEELDIVIQKNGTMAFDNAIIAYEPLWAVGTGKSATPEQAQEVHAFIRKRLSEVSPFIGENIRILYGGSVTPSNAADLFAQPDVDGGLIGGASLNSTEFLSLCTIAMSA</sequence>
<proteinExistence type="inferred from homology"/>
<evidence type="ECO:0000255" key="1">
    <source>
        <dbReference type="HAMAP-Rule" id="MF_00147"/>
    </source>
</evidence>
<comment type="function">
    <text evidence="1">Involved in the gluconeogenesis. Catalyzes stereospecifically the conversion of dihydroxyacetone phosphate (DHAP) to D-glyceraldehyde-3-phosphate (G3P).</text>
</comment>
<comment type="catalytic activity">
    <reaction evidence="1">
        <text>D-glyceraldehyde 3-phosphate = dihydroxyacetone phosphate</text>
        <dbReference type="Rhea" id="RHEA:18585"/>
        <dbReference type="ChEBI" id="CHEBI:57642"/>
        <dbReference type="ChEBI" id="CHEBI:59776"/>
        <dbReference type="EC" id="5.3.1.1"/>
    </reaction>
</comment>
<comment type="pathway">
    <text evidence="1">Carbohydrate biosynthesis; gluconeogenesis.</text>
</comment>
<comment type="pathway">
    <text evidence="1">Carbohydrate degradation; glycolysis; D-glyceraldehyde 3-phosphate from glycerone phosphate: step 1/1.</text>
</comment>
<comment type="subunit">
    <text evidence="1">Homodimer.</text>
</comment>
<comment type="subcellular location">
    <subcellularLocation>
        <location evidence="1">Cytoplasm</location>
    </subcellularLocation>
</comment>
<comment type="similarity">
    <text evidence="1">Belongs to the triosephosphate isomerase family.</text>
</comment>
<gene>
    <name evidence="1" type="primary">tpiA</name>
    <name type="ordered locus">Shewana3_1026</name>
</gene>